<keyword id="KW-0028">Amino-acid biosynthesis</keyword>
<keyword id="KW-0057">Aromatic amino acid biosynthesis</keyword>
<keyword id="KW-0456">Lyase</keyword>
<keyword id="KW-0663">Pyridoxal phosphate</keyword>
<keyword id="KW-1185">Reference proteome</keyword>
<keyword id="KW-0822">Tryptophan biosynthesis</keyword>
<reference key="1">
    <citation type="journal article" date="2003" name="Genome Res.">
        <title>Comparative complete genome sequence analysis of the amino acid replacements responsible for the thermostability of Corynebacterium efficiens.</title>
        <authorList>
            <person name="Nishio Y."/>
            <person name="Nakamura Y."/>
            <person name="Kawarabayasi Y."/>
            <person name="Usuda Y."/>
            <person name="Kimura E."/>
            <person name="Sugimoto S."/>
            <person name="Matsui K."/>
            <person name="Yamagishi A."/>
            <person name="Kikuchi H."/>
            <person name="Ikeo K."/>
            <person name="Gojobori T."/>
        </authorList>
    </citation>
    <scope>NUCLEOTIDE SEQUENCE [LARGE SCALE GENOMIC DNA]</scope>
    <source>
        <strain>DSM 44549 / YS-314 / AJ 12310 / JCM 11189 / NBRC 100395</strain>
    </source>
</reference>
<feature type="chain" id="PRO_0000098944" description="Tryptophan synthase beta chain 1">
    <location>
        <begin position="1"/>
        <end position="418"/>
    </location>
</feature>
<feature type="modified residue" description="N6-(pyridoxal phosphate)lysine" evidence="1">
    <location>
        <position position="99"/>
    </location>
</feature>
<comment type="function">
    <text evidence="1">The beta subunit is responsible for the synthesis of L-tryptophan from indole and L-serine.</text>
</comment>
<comment type="catalytic activity">
    <reaction>
        <text>(1S,2R)-1-C-(indol-3-yl)glycerol 3-phosphate + L-serine = D-glyceraldehyde 3-phosphate + L-tryptophan + H2O</text>
        <dbReference type="Rhea" id="RHEA:10532"/>
        <dbReference type="ChEBI" id="CHEBI:15377"/>
        <dbReference type="ChEBI" id="CHEBI:33384"/>
        <dbReference type="ChEBI" id="CHEBI:57912"/>
        <dbReference type="ChEBI" id="CHEBI:58866"/>
        <dbReference type="ChEBI" id="CHEBI:59776"/>
        <dbReference type="EC" id="4.2.1.20"/>
    </reaction>
</comment>
<comment type="cofactor">
    <cofactor evidence="1">
        <name>pyridoxal 5'-phosphate</name>
        <dbReference type="ChEBI" id="CHEBI:597326"/>
    </cofactor>
</comment>
<comment type="pathway">
    <text>Amino-acid biosynthesis; L-tryptophan biosynthesis; L-tryptophan from chorismate: step 5/5.</text>
</comment>
<comment type="subunit">
    <text evidence="1">Tetramer of two alpha and two beta chains.</text>
</comment>
<comment type="similarity">
    <text evidence="2">Belongs to the TrpB family.</text>
</comment>
<protein>
    <recommendedName>
        <fullName>Tryptophan synthase beta chain 1</fullName>
        <ecNumber>4.2.1.20</ecNumber>
    </recommendedName>
</protein>
<accession>Q8FLJ6</accession>
<gene>
    <name type="primary">trpB1</name>
    <name type="ordered locus">CE2872</name>
</gene>
<evidence type="ECO:0000250" key="1"/>
<evidence type="ECO:0000305" key="2"/>
<name>TRPB1_COREF</name>
<sequence length="418" mass="45026">MTDNKNLGGSTLLPAYFGEFGGQFVAESLLPALDQLEKAFVDATNHPEFRQELAAYLRDYLGRPTPLTECSNLPLPGQGRGYARIFLKREDLVHGGAHKTNQVIGQALLAKRMGKTRIIAETGAGQHGTATALACSLLGLECVVYMGAKDVARQQPNVYRMQLHGAKVIPVESGSGTLKDAVNEALRDWTATFHESHYLLGTAAGPHPFPTIVREFHKVISEEAKAQMLERTGKMPDVVVACVGGGSNAIGMFADFIDEEGVELVGAEPAGEGLDSGKHGATITNGQIGILHGTRSFLMRSSDGQVEESYSISAGLDYPGVGPQHAHLHSTGRATYVGITDAEALIAFQYLARYEGIIAALESSHALAYALKRAKLAEEEGKQITILVSLSGRGDKDVDHIRRTLEEKPELILKEEER</sequence>
<proteinExistence type="inferred from homology"/>
<dbReference type="EC" id="4.2.1.20"/>
<dbReference type="EMBL" id="BA000035">
    <property type="protein sequence ID" value="BAC19682.1"/>
    <property type="molecule type" value="Genomic_DNA"/>
</dbReference>
<dbReference type="RefSeq" id="WP_006768771.1">
    <property type="nucleotide sequence ID" value="NC_004369.1"/>
</dbReference>
<dbReference type="SMR" id="Q8FLJ6"/>
<dbReference type="STRING" id="196164.gene:10743322"/>
<dbReference type="KEGG" id="cef:CE2872"/>
<dbReference type="eggNOG" id="COG0133">
    <property type="taxonomic scope" value="Bacteria"/>
</dbReference>
<dbReference type="HOGENOM" id="CLU_016734_3_1_11"/>
<dbReference type="OrthoDB" id="9766131at2"/>
<dbReference type="UniPathway" id="UPA00035">
    <property type="reaction ID" value="UER00044"/>
</dbReference>
<dbReference type="Proteomes" id="UP000001409">
    <property type="component" value="Chromosome"/>
</dbReference>
<dbReference type="GO" id="GO:0005737">
    <property type="term" value="C:cytoplasm"/>
    <property type="evidence" value="ECO:0007669"/>
    <property type="project" value="TreeGrafter"/>
</dbReference>
<dbReference type="GO" id="GO:0004834">
    <property type="term" value="F:tryptophan synthase activity"/>
    <property type="evidence" value="ECO:0007669"/>
    <property type="project" value="UniProtKB-UniRule"/>
</dbReference>
<dbReference type="CDD" id="cd06446">
    <property type="entry name" value="Trp-synth_B"/>
    <property type="match status" value="1"/>
</dbReference>
<dbReference type="FunFam" id="3.40.50.1100:FF:000001">
    <property type="entry name" value="Tryptophan synthase beta chain"/>
    <property type="match status" value="1"/>
</dbReference>
<dbReference type="FunFam" id="3.40.50.1100:FF:000004">
    <property type="entry name" value="Tryptophan synthase beta chain"/>
    <property type="match status" value="1"/>
</dbReference>
<dbReference type="Gene3D" id="3.40.50.1100">
    <property type="match status" value="2"/>
</dbReference>
<dbReference type="HAMAP" id="MF_00133">
    <property type="entry name" value="Trp_synth_beta"/>
    <property type="match status" value="1"/>
</dbReference>
<dbReference type="InterPro" id="IPR006653">
    <property type="entry name" value="Trp_synth_b_CS"/>
</dbReference>
<dbReference type="InterPro" id="IPR006654">
    <property type="entry name" value="Trp_synth_beta"/>
</dbReference>
<dbReference type="InterPro" id="IPR023026">
    <property type="entry name" value="Trp_synth_beta/beta-like"/>
</dbReference>
<dbReference type="InterPro" id="IPR001926">
    <property type="entry name" value="TrpB-like_PALP"/>
</dbReference>
<dbReference type="InterPro" id="IPR036052">
    <property type="entry name" value="TrpB-like_PALP_sf"/>
</dbReference>
<dbReference type="NCBIfam" id="TIGR00263">
    <property type="entry name" value="trpB"/>
    <property type="match status" value="1"/>
</dbReference>
<dbReference type="PANTHER" id="PTHR48077:SF3">
    <property type="entry name" value="TRYPTOPHAN SYNTHASE"/>
    <property type="match status" value="1"/>
</dbReference>
<dbReference type="PANTHER" id="PTHR48077">
    <property type="entry name" value="TRYPTOPHAN SYNTHASE-RELATED"/>
    <property type="match status" value="1"/>
</dbReference>
<dbReference type="Pfam" id="PF00291">
    <property type="entry name" value="PALP"/>
    <property type="match status" value="1"/>
</dbReference>
<dbReference type="PIRSF" id="PIRSF001413">
    <property type="entry name" value="Trp_syn_beta"/>
    <property type="match status" value="1"/>
</dbReference>
<dbReference type="SUPFAM" id="SSF53686">
    <property type="entry name" value="Tryptophan synthase beta subunit-like PLP-dependent enzymes"/>
    <property type="match status" value="1"/>
</dbReference>
<dbReference type="PROSITE" id="PS00168">
    <property type="entry name" value="TRP_SYNTHASE_BETA"/>
    <property type="match status" value="1"/>
</dbReference>
<organism>
    <name type="scientific">Corynebacterium efficiens (strain DSM 44549 / YS-314 / AJ 12310 / JCM 11189 / NBRC 100395)</name>
    <dbReference type="NCBI Taxonomy" id="196164"/>
    <lineage>
        <taxon>Bacteria</taxon>
        <taxon>Bacillati</taxon>
        <taxon>Actinomycetota</taxon>
        <taxon>Actinomycetes</taxon>
        <taxon>Mycobacteriales</taxon>
        <taxon>Corynebacteriaceae</taxon>
        <taxon>Corynebacterium</taxon>
    </lineage>
</organism>